<evidence type="ECO:0000255" key="1">
    <source>
        <dbReference type="HAMAP-Rule" id="MF_00107"/>
    </source>
</evidence>
<sequence length="159" mass="16886">MRIGHGFDVHAFGGEGPIIIGGVRIPYEKGLLAHSDGDVALHALTDALLGAAALGDIGKLFPDTDPAFKGADSRELLREAWRRIQAKGYTLGNVDVTIIAQAPKMLPHIPQMRVFIAEDLGCHMDDVNVKATTTEKLGFTGRGEGIACEAVALLMKAAK</sequence>
<name>ISPF_SALSV</name>
<dbReference type="EC" id="4.6.1.12" evidence="1"/>
<dbReference type="EMBL" id="CP001127">
    <property type="protein sequence ID" value="ACF92995.1"/>
    <property type="molecule type" value="Genomic_DNA"/>
</dbReference>
<dbReference type="RefSeq" id="WP_001219244.1">
    <property type="nucleotide sequence ID" value="NC_011094.1"/>
</dbReference>
<dbReference type="SMR" id="B4TTW0"/>
<dbReference type="KEGG" id="sew:SeSA_A3080"/>
<dbReference type="HOGENOM" id="CLU_084630_2_0_6"/>
<dbReference type="UniPathway" id="UPA00056">
    <property type="reaction ID" value="UER00095"/>
</dbReference>
<dbReference type="Proteomes" id="UP000001865">
    <property type="component" value="Chromosome"/>
</dbReference>
<dbReference type="GO" id="GO:0008685">
    <property type="term" value="F:2-C-methyl-D-erythritol 2,4-cyclodiphosphate synthase activity"/>
    <property type="evidence" value="ECO:0007669"/>
    <property type="project" value="UniProtKB-UniRule"/>
</dbReference>
<dbReference type="GO" id="GO:0046872">
    <property type="term" value="F:metal ion binding"/>
    <property type="evidence" value="ECO:0007669"/>
    <property type="project" value="UniProtKB-KW"/>
</dbReference>
<dbReference type="GO" id="GO:0019288">
    <property type="term" value="P:isopentenyl diphosphate biosynthetic process, methylerythritol 4-phosphate pathway"/>
    <property type="evidence" value="ECO:0007669"/>
    <property type="project" value="UniProtKB-UniRule"/>
</dbReference>
<dbReference type="GO" id="GO:0016114">
    <property type="term" value="P:terpenoid biosynthetic process"/>
    <property type="evidence" value="ECO:0007669"/>
    <property type="project" value="InterPro"/>
</dbReference>
<dbReference type="CDD" id="cd00554">
    <property type="entry name" value="MECDP_synthase"/>
    <property type="match status" value="1"/>
</dbReference>
<dbReference type="FunFam" id="3.30.1330.50:FF:000001">
    <property type="entry name" value="2-C-methyl-D-erythritol 2,4-cyclodiphosphate synthase"/>
    <property type="match status" value="1"/>
</dbReference>
<dbReference type="Gene3D" id="3.30.1330.50">
    <property type="entry name" value="2-C-methyl-D-erythritol 2,4-cyclodiphosphate synthase"/>
    <property type="match status" value="1"/>
</dbReference>
<dbReference type="HAMAP" id="MF_00107">
    <property type="entry name" value="IspF"/>
    <property type="match status" value="1"/>
</dbReference>
<dbReference type="InterPro" id="IPR003526">
    <property type="entry name" value="MECDP_synthase"/>
</dbReference>
<dbReference type="InterPro" id="IPR020555">
    <property type="entry name" value="MECDP_synthase_CS"/>
</dbReference>
<dbReference type="InterPro" id="IPR036571">
    <property type="entry name" value="MECDP_synthase_sf"/>
</dbReference>
<dbReference type="NCBIfam" id="TIGR00151">
    <property type="entry name" value="ispF"/>
    <property type="match status" value="1"/>
</dbReference>
<dbReference type="PANTHER" id="PTHR43181">
    <property type="entry name" value="2-C-METHYL-D-ERYTHRITOL 2,4-CYCLODIPHOSPHATE SYNTHASE, CHLOROPLASTIC"/>
    <property type="match status" value="1"/>
</dbReference>
<dbReference type="PANTHER" id="PTHR43181:SF1">
    <property type="entry name" value="2-C-METHYL-D-ERYTHRITOL 2,4-CYCLODIPHOSPHATE SYNTHASE, CHLOROPLASTIC"/>
    <property type="match status" value="1"/>
</dbReference>
<dbReference type="Pfam" id="PF02542">
    <property type="entry name" value="YgbB"/>
    <property type="match status" value="1"/>
</dbReference>
<dbReference type="SUPFAM" id="SSF69765">
    <property type="entry name" value="IpsF-like"/>
    <property type="match status" value="1"/>
</dbReference>
<dbReference type="PROSITE" id="PS01350">
    <property type="entry name" value="ISPF"/>
    <property type="match status" value="1"/>
</dbReference>
<comment type="function">
    <text evidence="1">Involved in the biosynthesis of isopentenyl diphosphate (IPP) and dimethylallyl diphosphate (DMAPP), two major building blocks of isoprenoid compounds. Catalyzes the conversion of 4-diphosphocytidyl-2-C-methyl-D-erythritol 2-phosphate (CDP-ME2P) to 2-C-methyl-D-erythritol 2,4-cyclodiphosphate (ME-CPP) with a corresponding release of cytidine 5-monophosphate (CMP).</text>
</comment>
<comment type="catalytic activity">
    <reaction evidence="1">
        <text>4-CDP-2-C-methyl-D-erythritol 2-phosphate = 2-C-methyl-D-erythritol 2,4-cyclic diphosphate + CMP</text>
        <dbReference type="Rhea" id="RHEA:23864"/>
        <dbReference type="ChEBI" id="CHEBI:57919"/>
        <dbReference type="ChEBI" id="CHEBI:58483"/>
        <dbReference type="ChEBI" id="CHEBI:60377"/>
        <dbReference type="EC" id="4.6.1.12"/>
    </reaction>
</comment>
<comment type="cofactor">
    <cofactor evidence="1">
        <name>a divalent metal cation</name>
        <dbReference type="ChEBI" id="CHEBI:60240"/>
    </cofactor>
    <text evidence="1">Binds 1 divalent metal cation per subunit.</text>
</comment>
<comment type="pathway">
    <text evidence="1">Isoprenoid biosynthesis; isopentenyl diphosphate biosynthesis via DXP pathway; isopentenyl diphosphate from 1-deoxy-D-xylulose 5-phosphate: step 4/6.</text>
</comment>
<comment type="subunit">
    <text evidence="1">Homotrimer.</text>
</comment>
<comment type="similarity">
    <text evidence="1">Belongs to the IspF family.</text>
</comment>
<keyword id="KW-0414">Isoprene biosynthesis</keyword>
<keyword id="KW-0456">Lyase</keyword>
<keyword id="KW-0479">Metal-binding</keyword>
<reference key="1">
    <citation type="journal article" date="2011" name="J. Bacteriol.">
        <title>Comparative genomics of 28 Salmonella enterica isolates: evidence for CRISPR-mediated adaptive sublineage evolution.</title>
        <authorList>
            <person name="Fricke W.F."/>
            <person name="Mammel M.K."/>
            <person name="McDermott P.F."/>
            <person name="Tartera C."/>
            <person name="White D.G."/>
            <person name="Leclerc J.E."/>
            <person name="Ravel J."/>
            <person name="Cebula T.A."/>
        </authorList>
    </citation>
    <scope>NUCLEOTIDE SEQUENCE [LARGE SCALE GENOMIC DNA]</scope>
    <source>
        <strain>CVM19633</strain>
    </source>
</reference>
<proteinExistence type="inferred from homology"/>
<feature type="chain" id="PRO_1000094290" description="2-C-methyl-D-erythritol 2,4-cyclodiphosphate synthase">
    <location>
        <begin position="1"/>
        <end position="159"/>
    </location>
</feature>
<feature type="binding site" evidence="1">
    <location>
        <begin position="8"/>
        <end position="10"/>
    </location>
    <ligand>
        <name>4-CDP-2-C-methyl-D-erythritol 2-phosphate</name>
        <dbReference type="ChEBI" id="CHEBI:57919"/>
    </ligand>
</feature>
<feature type="binding site" evidence="1">
    <location>
        <position position="8"/>
    </location>
    <ligand>
        <name>a divalent metal cation</name>
        <dbReference type="ChEBI" id="CHEBI:60240"/>
    </ligand>
</feature>
<feature type="binding site" evidence="1">
    <location>
        <position position="10"/>
    </location>
    <ligand>
        <name>a divalent metal cation</name>
        <dbReference type="ChEBI" id="CHEBI:60240"/>
    </ligand>
</feature>
<feature type="binding site" evidence="1">
    <location>
        <begin position="34"/>
        <end position="35"/>
    </location>
    <ligand>
        <name>4-CDP-2-C-methyl-D-erythritol 2-phosphate</name>
        <dbReference type="ChEBI" id="CHEBI:57919"/>
    </ligand>
</feature>
<feature type="binding site" evidence="1">
    <location>
        <position position="42"/>
    </location>
    <ligand>
        <name>a divalent metal cation</name>
        <dbReference type="ChEBI" id="CHEBI:60240"/>
    </ligand>
</feature>
<feature type="binding site" evidence="1">
    <location>
        <begin position="56"/>
        <end position="58"/>
    </location>
    <ligand>
        <name>4-CDP-2-C-methyl-D-erythritol 2-phosphate</name>
        <dbReference type="ChEBI" id="CHEBI:57919"/>
    </ligand>
</feature>
<feature type="binding site" evidence="1">
    <location>
        <begin position="61"/>
        <end position="65"/>
    </location>
    <ligand>
        <name>4-CDP-2-C-methyl-D-erythritol 2-phosphate</name>
        <dbReference type="ChEBI" id="CHEBI:57919"/>
    </ligand>
</feature>
<feature type="binding site" evidence="1">
    <location>
        <begin position="100"/>
        <end position="106"/>
    </location>
    <ligand>
        <name>4-CDP-2-C-methyl-D-erythritol 2-phosphate</name>
        <dbReference type="ChEBI" id="CHEBI:57919"/>
    </ligand>
</feature>
<feature type="binding site" evidence="1">
    <location>
        <begin position="132"/>
        <end position="135"/>
    </location>
    <ligand>
        <name>4-CDP-2-C-methyl-D-erythritol 2-phosphate</name>
        <dbReference type="ChEBI" id="CHEBI:57919"/>
    </ligand>
</feature>
<feature type="binding site" evidence="1">
    <location>
        <position position="139"/>
    </location>
    <ligand>
        <name>4-CDP-2-C-methyl-D-erythritol 2-phosphate</name>
        <dbReference type="ChEBI" id="CHEBI:57919"/>
    </ligand>
</feature>
<feature type="binding site" evidence="1">
    <location>
        <position position="142"/>
    </location>
    <ligand>
        <name>4-CDP-2-C-methyl-D-erythritol 2-phosphate</name>
        <dbReference type="ChEBI" id="CHEBI:57919"/>
    </ligand>
</feature>
<feature type="site" description="Transition state stabilizer" evidence="1">
    <location>
        <position position="34"/>
    </location>
</feature>
<feature type="site" description="Transition state stabilizer" evidence="1">
    <location>
        <position position="133"/>
    </location>
</feature>
<organism>
    <name type="scientific">Salmonella schwarzengrund (strain CVM19633)</name>
    <dbReference type="NCBI Taxonomy" id="439843"/>
    <lineage>
        <taxon>Bacteria</taxon>
        <taxon>Pseudomonadati</taxon>
        <taxon>Pseudomonadota</taxon>
        <taxon>Gammaproteobacteria</taxon>
        <taxon>Enterobacterales</taxon>
        <taxon>Enterobacteriaceae</taxon>
        <taxon>Salmonella</taxon>
    </lineage>
</organism>
<accession>B4TTW0</accession>
<gene>
    <name evidence="1" type="primary">ispF</name>
    <name type="ordered locus">SeSA_A3080</name>
</gene>
<protein>
    <recommendedName>
        <fullName evidence="1">2-C-methyl-D-erythritol 2,4-cyclodiphosphate synthase</fullName>
        <shortName evidence="1">MECDP-synthase</shortName>
        <shortName evidence="1">MECPP-synthase</shortName>
        <shortName evidence="1">MECPS</shortName>
        <ecNumber evidence="1">4.6.1.12</ecNumber>
    </recommendedName>
</protein>